<sequence>MDGCHLSRDKLQGDGEGCDLKTSDYLKKYGVRLKKHLGQVFLSDDRIAKRIVKAAELTPEDVVVEIGAGAGTLTEELAKTGARVIAYEIDESLAPILQERLSKYPNVELRFEDFLKAKNVPEGAICVSNIPYNITGPLMEKIIEWKFKRAIVMIQKEVGERILAKPGKKTYGYLSVVVQTFYEVKKLFDVSRSCFVPNPEVDSTVVDLKRKPVDLDFEKFKKFVSMIFAKKRKTLKNNLRPFLSIFEGVDLSRRAEQLTVEEIVELYEKWRRALECSRG</sequence>
<reference key="1">
    <citation type="journal article" date="1999" name="Nature">
        <title>Evidence for lateral gene transfer between Archaea and Bacteria from genome sequence of Thermotoga maritima.</title>
        <authorList>
            <person name="Nelson K.E."/>
            <person name="Clayton R.A."/>
            <person name="Gill S.R."/>
            <person name="Gwinn M.L."/>
            <person name="Dodson R.J."/>
            <person name="Haft D.H."/>
            <person name="Hickey E.K."/>
            <person name="Peterson J.D."/>
            <person name="Nelson W.C."/>
            <person name="Ketchum K.A."/>
            <person name="McDonald L.A."/>
            <person name="Utterback T.R."/>
            <person name="Malek J.A."/>
            <person name="Linher K.D."/>
            <person name="Garrett M.M."/>
            <person name="Stewart A.M."/>
            <person name="Cotton M.D."/>
            <person name="Pratt M.S."/>
            <person name="Phillips C.A."/>
            <person name="Richardson D.L."/>
            <person name="Heidelberg J.F."/>
            <person name="Sutton G.G."/>
            <person name="Fleischmann R.D."/>
            <person name="Eisen J.A."/>
            <person name="White O."/>
            <person name="Salzberg S.L."/>
            <person name="Smith H.O."/>
            <person name="Venter J.C."/>
            <person name="Fraser C.M."/>
        </authorList>
    </citation>
    <scope>NUCLEOTIDE SEQUENCE [LARGE SCALE GENOMIC DNA]</scope>
    <source>
        <strain>ATCC 43589 / DSM 3109 / JCM 10099 / NBRC 100826 / MSB8</strain>
    </source>
</reference>
<name>RSMA_THEMA</name>
<dbReference type="EC" id="2.1.1.182" evidence="1"/>
<dbReference type="EMBL" id="AE000512">
    <property type="protein sequence ID" value="AAD36507.1"/>
    <property type="molecule type" value="Genomic_DNA"/>
</dbReference>
<dbReference type="PIR" id="B72255">
    <property type="entry name" value="B72255"/>
</dbReference>
<dbReference type="RefSeq" id="NP_229237.1">
    <property type="nucleotide sequence ID" value="NC_000853.1"/>
</dbReference>
<dbReference type="SMR" id="Q9X1F1"/>
<dbReference type="FunCoup" id="Q9X1F1">
    <property type="interactions" value="340"/>
</dbReference>
<dbReference type="STRING" id="243274.TM_1437"/>
<dbReference type="PaxDb" id="243274-THEMA_07130"/>
<dbReference type="DNASU" id="898038"/>
<dbReference type="EnsemblBacteria" id="AAD36507">
    <property type="protein sequence ID" value="AAD36507"/>
    <property type="gene ID" value="TM_1437"/>
</dbReference>
<dbReference type="KEGG" id="tma:TM1437"/>
<dbReference type="PATRIC" id="fig|243274.5.peg.1449"/>
<dbReference type="eggNOG" id="COG0030">
    <property type="taxonomic scope" value="Bacteria"/>
</dbReference>
<dbReference type="InParanoid" id="Q9X1F1"/>
<dbReference type="OrthoDB" id="9814755at2"/>
<dbReference type="Proteomes" id="UP000008183">
    <property type="component" value="Chromosome"/>
</dbReference>
<dbReference type="GO" id="GO:0005829">
    <property type="term" value="C:cytosol"/>
    <property type="evidence" value="ECO:0000318"/>
    <property type="project" value="GO_Central"/>
</dbReference>
<dbReference type="GO" id="GO:0052908">
    <property type="term" value="F:16S rRNA (adenine(1518)-N(6)/adenine(1519)-N(6))-dimethyltransferase activity"/>
    <property type="evidence" value="ECO:0007669"/>
    <property type="project" value="UniProtKB-EC"/>
</dbReference>
<dbReference type="GO" id="GO:0003723">
    <property type="term" value="F:RNA binding"/>
    <property type="evidence" value="ECO:0007669"/>
    <property type="project" value="UniProtKB-KW"/>
</dbReference>
<dbReference type="GO" id="GO:0000179">
    <property type="term" value="F:rRNA (adenine-N6,N6-)-dimethyltransferase activity"/>
    <property type="evidence" value="ECO:0000318"/>
    <property type="project" value="GO_Central"/>
</dbReference>
<dbReference type="GO" id="GO:0031167">
    <property type="term" value="P:rRNA methylation"/>
    <property type="evidence" value="ECO:0000318"/>
    <property type="project" value="GO_Central"/>
</dbReference>
<dbReference type="CDD" id="cd02440">
    <property type="entry name" value="AdoMet_MTases"/>
    <property type="match status" value="1"/>
</dbReference>
<dbReference type="FunFam" id="3.40.50.150:FF:000871">
    <property type="entry name" value="Ribosomal RNA small subunit methyltransferase A"/>
    <property type="match status" value="1"/>
</dbReference>
<dbReference type="Gene3D" id="1.10.8.100">
    <property type="entry name" value="Ribosomal RNA adenine dimethylase-like, domain 2"/>
    <property type="match status" value="1"/>
</dbReference>
<dbReference type="Gene3D" id="3.40.50.150">
    <property type="entry name" value="Vaccinia Virus protein VP39"/>
    <property type="match status" value="1"/>
</dbReference>
<dbReference type="HAMAP" id="MF_00607">
    <property type="entry name" value="16SrRNA_methyltr_A"/>
    <property type="match status" value="1"/>
</dbReference>
<dbReference type="InterPro" id="IPR001737">
    <property type="entry name" value="KsgA/Erm"/>
</dbReference>
<dbReference type="InterPro" id="IPR023165">
    <property type="entry name" value="rRNA_Ade_diMease-like_C"/>
</dbReference>
<dbReference type="InterPro" id="IPR020596">
    <property type="entry name" value="rRNA_Ade_Mease_Trfase_CS"/>
</dbReference>
<dbReference type="InterPro" id="IPR020598">
    <property type="entry name" value="rRNA_Ade_methylase_Trfase_N"/>
</dbReference>
<dbReference type="InterPro" id="IPR011530">
    <property type="entry name" value="rRNA_adenine_dimethylase"/>
</dbReference>
<dbReference type="InterPro" id="IPR029063">
    <property type="entry name" value="SAM-dependent_MTases_sf"/>
</dbReference>
<dbReference type="NCBIfam" id="TIGR00755">
    <property type="entry name" value="ksgA"/>
    <property type="match status" value="1"/>
</dbReference>
<dbReference type="PANTHER" id="PTHR11727">
    <property type="entry name" value="DIMETHYLADENOSINE TRANSFERASE"/>
    <property type="match status" value="1"/>
</dbReference>
<dbReference type="PANTHER" id="PTHR11727:SF7">
    <property type="entry name" value="DIMETHYLADENOSINE TRANSFERASE-RELATED"/>
    <property type="match status" value="1"/>
</dbReference>
<dbReference type="Pfam" id="PF00398">
    <property type="entry name" value="RrnaAD"/>
    <property type="match status" value="1"/>
</dbReference>
<dbReference type="SMART" id="SM00650">
    <property type="entry name" value="rADc"/>
    <property type="match status" value="1"/>
</dbReference>
<dbReference type="SUPFAM" id="SSF53335">
    <property type="entry name" value="S-adenosyl-L-methionine-dependent methyltransferases"/>
    <property type="match status" value="1"/>
</dbReference>
<dbReference type="PROSITE" id="PS01131">
    <property type="entry name" value="RRNA_A_DIMETH"/>
    <property type="match status" value="1"/>
</dbReference>
<dbReference type="PROSITE" id="PS51689">
    <property type="entry name" value="SAM_RNA_A_N6_MT"/>
    <property type="match status" value="1"/>
</dbReference>
<evidence type="ECO:0000255" key="1">
    <source>
        <dbReference type="HAMAP-Rule" id="MF_00607"/>
    </source>
</evidence>
<gene>
    <name evidence="1" type="primary">rsmA</name>
    <name evidence="1" type="synonym">ksgA</name>
    <name type="ordered locus">TM_1437</name>
</gene>
<protein>
    <recommendedName>
        <fullName evidence="1">Ribosomal RNA small subunit methyltransferase A</fullName>
        <ecNumber evidence="1">2.1.1.182</ecNumber>
    </recommendedName>
    <alternativeName>
        <fullName evidence="1">16S rRNA (adenine(1518)-N(6)/adenine(1519)-N(6))-dimethyltransferase</fullName>
    </alternativeName>
    <alternativeName>
        <fullName evidence="1">16S rRNA dimethyladenosine transferase</fullName>
    </alternativeName>
    <alternativeName>
        <fullName evidence="1">16S rRNA dimethylase</fullName>
    </alternativeName>
    <alternativeName>
        <fullName evidence="1">S-adenosylmethionine-6-N', N'-adenosyl(rRNA) dimethyltransferase</fullName>
    </alternativeName>
</protein>
<comment type="function">
    <text evidence="1">Specifically dimethylates two adjacent adenosines (A1518 and A1519) in the loop of a conserved hairpin near the 3'-end of 16S rRNA in the 30S particle. May play a critical role in biogenesis of 30S subunits.</text>
</comment>
<comment type="catalytic activity">
    <reaction evidence="1">
        <text>adenosine(1518)/adenosine(1519) in 16S rRNA + 4 S-adenosyl-L-methionine = N(6)-dimethyladenosine(1518)/N(6)-dimethyladenosine(1519) in 16S rRNA + 4 S-adenosyl-L-homocysteine + 4 H(+)</text>
        <dbReference type="Rhea" id="RHEA:19609"/>
        <dbReference type="Rhea" id="RHEA-COMP:10232"/>
        <dbReference type="Rhea" id="RHEA-COMP:10233"/>
        <dbReference type="ChEBI" id="CHEBI:15378"/>
        <dbReference type="ChEBI" id="CHEBI:57856"/>
        <dbReference type="ChEBI" id="CHEBI:59789"/>
        <dbReference type="ChEBI" id="CHEBI:74411"/>
        <dbReference type="ChEBI" id="CHEBI:74493"/>
        <dbReference type="EC" id="2.1.1.182"/>
    </reaction>
</comment>
<comment type="subcellular location">
    <subcellularLocation>
        <location evidence="1">Cytoplasm</location>
    </subcellularLocation>
</comment>
<comment type="similarity">
    <text evidence="1">Belongs to the class I-like SAM-binding methyltransferase superfamily. rRNA adenine N(6)-methyltransferase family. RsmA subfamily.</text>
</comment>
<accession>Q9X1F1</accession>
<organism>
    <name type="scientific">Thermotoga maritima (strain ATCC 43589 / DSM 3109 / JCM 10099 / NBRC 100826 / MSB8)</name>
    <dbReference type="NCBI Taxonomy" id="243274"/>
    <lineage>
        <taxon>Bacteria</taxon>
        <taxon>Thermotogati</taxon>
        <taxon>Thermotogota</taxon>
        <taxon>Thermotogae</taxon>
        <taxon>Thermotogales</taxon>
        <taxon>Thermotogaceae</taxon>
        <taxon>Thermotoga</taxon>
    </lineage>
</organism>
<proteinExistence type="inferred from homology"/>
<keyword id="KW-0963">Cytoplasm</keyword>
<keyword id="KW-0489">Methyltransferase</keyword>
<keyword id="KW-1185">Reference proteome</keyword>
<keyword id="KW-0694">RNA-binding</keyword>
<keyword id="KW-0698">rRNA processing</keyword>
<keyword id="KW-0949">S-adenosyl-L-methionine</keyword>
<keyword id="KW-0808">Transferase</keyword>
<feature type="chain" id="PRO_0000101629" description="Ribosomal RNA small subunit methyltransferase A">
    <location>
        <begin position="1"/>
        <end position="279"/>
    </location>
</feature>
<feature type="binding site" evidence="1">
    <location>
        <position position="42"/>
    </location>
    <ligand>
        <name>S-adenosyl-L-methionine</name>
        <dbReference type="ChEBI" id="CHEBI:59789"/>
    </ligand>
</feature>
<feature type="binding site" evidence="1">
    <location>
        <position position="67"/>
    </location>
    <ligand>
        <name>S-adenosyl-L-methionine</name>
        <dbReference type="ChEBI" id="CHEBI:59789"/>
    </ligand>
</feature>
<feature type="binding site" evidence="1">
    <location>
        <position position="88"/>
    </location>
    <ligand>
        <name>S-adenosyl-L-methionine</name>
        <dbReference type="ChEBI" id="CHEBI:59789"/>
    </ligand>
</feature>
<feature type="binding site" evidence="1">
    <location>
        <position position="113"/>
    </location>
    <ligand>
        <name>S-adenosyl-L-methionine</name>
        <dbReference type="ChEBI" id="CHEBI:59789"/>
    </ligand>
</feature>
<feature type="binding site" evidence="1">
    <location>
        <position position="129"/>
    </location>
    <ligand>
        <name>S-adenosyl-L-methionine</name>
        <dbReference type="ChEBI" id="CHEBI:59789"/>
    </ligand>
</feature>